<reference key="1">
    <citation type="journal article" date="2002" name="Nature">
        <title>The genome sequence of Schizosaccharomyces pombe.</title>
        <authorList>
            <person name="Wood V."/>
            <person name="Gwilliam R."/>
            <person name="Rajandream M.A."/>
            <person name="Lyne M.H."/>
            <person name="Lyne R."/>
            <person name="Stewart A."/>
            <person name="Sgouros J.G."/>
            <person name="Peat N."/>
            <person name="Hayles J."/>
            <person name="Baker S.G."/>
            <person name="Basham D."/>
            <person name="Bowman S."/>
            <person name="Brooks K."/>
            <person name="Brown D."/>
            <person name="Brown S."/>
            <person name="Chillingworth T."/>
            <person name="Churcher C.M."/>
            <person name="Collins M."/>
            <person name="Connor R."/>
            <person name="Cronin A."/>
            <person name="Davis P."/>
            <person name="Feltwell T."/>
            <person name="Fraser A."/>
            <person name="Gentles S."/>
            <person name="Goble A."/>
            <person name="Hamlin N."/>
            <person name="Harris D.E."/>
            <person name="Hidalgo J."/>
            <person name="Hodgson G."/>
            <person name="Holroyd S."/>
            <person name="Hornsby T."/>
            <person name="Howarth S."/>
            <person name="Huckle E.J."/>
            <person name="Hunt S."/>
            <person name="Jagels K."/>
            <person name="James K.D."/>
            <person name="Jones L."/>
            <person name="Jones M."/>
            <person name="Leather S."/>
            <person name="McDonald S."/>
            <person name="McLean J."/>
            <person name="Mooney P."/>
            <person name="Moule S."/>
            <person name="Mungall K.L."/>
            <person name="Murphy L.D."/>
            <person name="Niblett D."/>
            <person name="Odell C."/>
            <person name="Oliver K."/>
            <person name="O'Neil S."/>
            <person name="Pearson D."/>
            <person name="Quail M.A."/>
            <person name="Rabbinowitsch E."/>
            <person name="Rutherford K.M."/>
            <person name="Rutter S."/>
            <person name="Saunders D."/>
            <person name="Seeger K."/>
            <person name="Sharp S."/>
            <person name="Skelton J."/>
            <person name="Simmonds M.N."/>
            <person name="Squares R."/>
            <person name="Squares S."/>
            <person name="Stevens K."/>
            <person name="Taylor K."/>
            <person name="Taylor R.G."/>
            <person name="Tivey A."/>
            <person name="Walsh S.V."/>
            <person name="Warren T."/>
            <person name="Whitehead S."/>
            <person name="Woodward J.R."/>
            <person name="Volckaert G."/>
            <person name="Aert R."/>
            <person name="Robben J."/>
            <person name="Grymonprez B."/>
            <person name="Weltjens I."/>
            <person name="Vanstreels E."/>
            <person name="Rieger M."/>
            <person name="Schaefer M."/>
            <person name="Mueller-Auer S."/>
            <person name="Gabel C."/>
            <person name="Fuchs M."/>
            <person name="Duesterhoeft A."/>
            <person name="Fritzc C."/>
            <person name="Holzer E."/>
            <person name="Moestl D."/>
            <person name="Hilbert H."/>
            <person name="Borzym K."/>
            <person name="Langer I."/>
            <person name="Beck A."/>
            <person name="Lehrach H."/>
            <person name="Reinhardt R."/>
            <person name="Pohl T.M."/>
            <person name="Eger P."/>
            <person name="Zimmermann W."/>
            <person name="Wedler H."/>
            <person name="Wambutt R."/>
            <person name="Purnelle B."/>
            <person name="Goffeau A."/>
            <person name="Cadieu E."/>
            <person name="Dreano S."/>
            <person name="Gloux S."/>
            <person name="Lelaure V."/>
            <person name="Mottier S."/>
            <person name="Galibert F."/>
            <person name="Aves S.J."/>
            <person name="Xiang Z."/>
            <person name="Hunt C."/>
            <person name="Moore K."/>
            <person name="Hurst S.M."/>
            <person name="Lucas M."/>
            <person name="Rochet M."/>
            <person name="Gaillardin C."/>
            <person name="Tallada V.A."/>
            <person name="Garzon A."/>
            <person name="Thode G."/>
            <person name="Daga R.R."/>
            <person name="Cruzado L."/>
            <person name="Jimenez J."/>
            <person name="Sanchez M."/>
            <person name="del Rey F."/>
            <person name="Benito J."/>
            <person name="Dominguez A."/>
            <person name="Revuelta J.L."/>
            <person name="Moreno S."/>
            <person name="Armstrong J."/>
            <person name="Forsburg S.L."/>
            <person name="Cerutti L."/>
            <person name="Lowe T."/>
            <person name="McCombie W.R."/>
            <person name="Paulsen I."/>
            <person name="Potashkin J."/>
            <person name="Shpakovski G.V."/>
            <person name="Ussery D."/>
            <person name="Barrell B.G."/>
            <person name="Nurse P."/>
        </authorList>
    </citation>
    <scope>NUCLEOTIDE SEQUENCE [LARGE SCALE GENOMIC DNA]</scope>
    <source>
        <strain>972 / ATCC 24843</strain>
    </source>
</reference>
<reference key="2">
    <citation type="journal article" date="2006" name="Nat. Biotechnol.">
        <title>ORFeome cloning and global analysis of protein localization in the fission yeast Schizosaccharomyces pombe.</title>
        <authorList>
            <person name="Matsuyama A."/>
            <person name="Arai R."/>
            <person name="Yashiroda Y."/>
            <person name="Shirai A."/>
            <person name="Kamata A."/>
            <person name="Sekido S."/>
            <person name="Kobayashi Y."/>
            <person name="Hashimoto A."/>
            <person name="Hamamoto M."/>
            <person name="Hiraoka Y."/>
            <person name="Horinouchi S."/>
            <person name="Yoshida M."/>
        </authorList>
    </citation>
    <scope>SUBCELLULAR LOCATION [LARGE SCALE ANALYSIS]</scope>
</reference>
<reference key="3">
    <citation type="journal article" date="2008" name="Genome Biol.">
        <title>Chromatin Central: towards the comparative proteome by accurate mapping of the yeast proteomic environment.</title>
        <authorList>
            <person name="Shevchenko A."/>
            <person name="Roguev A."/>
            <person name="Schaft D."/>
            <person name="Buchanan L."/>
            <person name="Habermann B."/>
            <person name="Sakalar C."/>
            <person name="Thomas H."/>
            <person name="Krogan N.J."/>
            <person name="Shevchenko A."/>
            <person name="Stewart A.F."/>
        </authorList>
    </citation>
    <scope>IDENTIFICATION IN THE INO80 COMPLEX</scope>
    <scope>IDENTIFICATION BY MASS SPECTROMETRY</scope>
</reference>
<reference key="4">
    <citation type="journal article" date="2008" name="J. Proteome Res.">
        <title>Phosphoproteome analysis of fission yeast.</title>
        <authorList>
            <person name="Wilson-Grady J.T."/>
            <person name="Villen J."/>
            <person name="Gygi S.P."/>
        </authorList>
    </citation>
    <scope>PHOSPHORYLATION [LARGE SCALE ANALYSIS] AT SER-86 AND THR-90</scope>
    <scope>IDENTIFICATION BY MASS SPECTROMETRY</scope>
</reference>
<dbReference type="EMBL" id="CU329670">
    <property type="protein sequence ID" value="CAB72229.1"/>
    <property type="molecule type" value="Genomic_DNA"/>
</dbReference>
<dbReference type="PIR" id="T50178">
    <property type="entry name" value="T50178"/>
</dbReference>
<dbReference type="RefSeq" id="NP_593104.1">
    <property type="nucleotide sequence ID" value="NM_001018501.2"/>
</dbReference>
<dbReference type="SMR" id="Q9P7S9"/>
<dbReference type="BioGRID" id="277929">
    <property type="interactions" value="38"/>
</dbReference>
<dbReference type="FunCoup" id="Q9P7S9">
    <property type="interactions" value="12"/>
</dbReference>
<dbReference type="STRING" id="284812.Q9P7S9"/>
<dbReference type="iPTMnet" id="Q9P7S9"/>
<dbReference type="PaxDb" id="4896-SPAC23G3.04.1"/>
<dbReference type="EnsemblFungi" id="SPAC23G3.04.1">
    <property type="protein sequence ID" value="SPAC23G3.04.1:pep"/>
    <property type="gene ID" value="SPAC23G3.04"/>
</dbReference>
<dbReference type="GeneID" id="2541424"/>
<dbReference type="KEGG" id="spo:2541424"/>
<dbReference type="PomBase" id="SPAC23G3.04">
    <property type="gene designation" value="ies4"/>
</dbReference>
<dbReference type="VEuPathDB" id="FungiDB:SPAC23G3.04"/>
<dbReference type="eggNOG" id="ENOG502SECK">
    <property type="taxonomic scope" value="Eukaryota"/>
</dbReference>
<dbReference type="HOGENOM" id="CLU_1403191_0_0_1"/>
<dbReference type="InParanoid" id="Q9P7S9"/>
<dbReference type="OMA" id="VSTIVWK"/>
<dbReference type="PRO" id="PR:Q9P7S9"/>
<dbReference type="Proteomes" id="UP000002485">
    <property type="component" value="Chromosome I"/>
</dbReference>
<dbReference type="GO" id="GO:0000785">
    <property type="term" value="C:chromatin"/>
    <property type="evidence" value="ECO:0000314"/>
    <property type="project" value="PomBase"/>
</dbReference>
<dbReference type="GO" id="GO:0005829">
    <property type="term" value="C:cytosol"/>
    <property type="evidence" value="ECO:0007005"/>
    <property type="project" value="PomBase"/>
</dbReference>
<dbReference type="GO" id="GO:0031011">
    <property type="term" value="C:Ino80 complex"/>
    <property type="evidence" value="ECO:0000314"/>
    <property type="project" value="PomBase"/>
</dbReference>
<dbReference type="GO" id="GO:0005634">
    <property type="term" value="C:nucleus"/>
    <property type="evidence" value="ECO:0007005"/>
    <property type="project" value="PomBase"/>
</dbReference>
<dbReference type="GO" id="GO:0003677">
    <property type="term" value="F:DNA binding"/>
    <property type="evidence" value="ECO:0007669"/>
    <property type="project" value="UniProtKB-KW"/>
</dbReference>
<dbReference type="GO" id="GO:0006338">
    <property type="term" value="P:chromatin remodeling"/>
    <property type="evidence" value="ECO:0000314"/>
    <property type="project" value="PomBase"/>
</dbReference>
<dbReference type="GO" id="GO:0006281">
    <property type="term" value="P:DNA repair"/>
    <property type="evidence" value="ECO:0007669"/>
    <property type="project" value="UniProtKB-KW"/>
</dbReference>
<dbReference type="GO" id="GO:0045815">
    <property type="term" value="P:transcription initiation-coupled chromatin remodeling"/>
    <property type="evidence" value="ECO:0000305"/>
    <property type="project" value="PomBase"/>
</dbReference>
<dbReference type="InterPro" id="IPR013175">
    <property type="entry name" value="INO80_su_Ies4"/>
</dbReference>
<dbReference type="PANTHER" id="PTHR28061">
    <property type="entry name" value="INO EIGHTY SUBUNIT 4"/>
    <property type="match status" value="1"/>
</dbReference>
<dbReference type="PANTHER" id="PTHR28061:SF1">
    <property type="entry name" value="INO80 COMPLEX SUBUNIT 4"/>
    <property type="match status" value="1"/>
</dbReference>
<dbReference type="Pfam" id="PF08193">
    <property type="entry name" value="INO80_Ies4"/>
    <property type="match status" value="1"/>
</dbReference>
<sequence>MSETLVLHLKVPTERFREVLSSLKEKQNFTASPSSQPKPQERPFQMKKPRAPYGMGPRAMKRREKAEKEKLGVVNDELAESSKPSSGAATPTRSAPKSSAGLINSGLRALDRSGKPCRRWEKKPISIRSISTIVWKLPLWIGTPDSIPNTPELPVKTTLDSVNEIAAALSTHAESSPMDATSPVDSMPESATGI</sequence>
<proteinExistence type="evidence at protein level"/>
<organism>
    <name type="scientific">Schizosaccharomyces pombe (strain 972 / ATCC 24843)</name>
    <name type="common">Fission yeast</name>
    <dbReference type="NCBI Taxonomy" id="284812"/>
    <lineage>
        <taxon>Eukaryota</taxon>
        <taxon>Fungi</taxon>
        <taxon>Dikarya</taxon>
        <taxon>Ascomycota</taxon>
        <taxon>Taphrinomycotina</taxon>
        <taxon>Schizosaccharomycetes</taxon>
        <taxon>Schizosaccharomycetales</taxon>
        <taxon>Schizosaccharomycetaceae</taxon>
        <taxon>Schizosaccharomyces</taxon>
    </lineage>
</organism>
<keyword id="KW-0156">Chromatin regulator</keyword>
<keyword id="KW-0963">Cytoplasm</keyword>
<keyword id="KW-0227">DNA damage</keyword>
<keyword id="KW-0234">DNA repair</keyword>
<keyword id="KW-0238">DNA-binding</keyword>
<keyword id="KW-0539">Nucleus</keyword>
<keyword id="KW-0597">Phosphoprotein</keyword>
<keyword id="KW-1185">Reference proteome</keyword>
<keyword id="KW-0804">Transcription</keyword>
<keyword id="KW-0805">Transcription regulation</keyword>
<evidence type="ECO:0000256" key="1">
    <source>
        <dbReference type="SAM" id="MobiDB-lite"/>
    </source>
</evidence>
<evidence type="ECO:0000269" key="2">
    <source>
    </source>
</evidence>
<evidence type="ECO:0000269" key="3">
    <source>
    </source>
</evidence>
<evidence type="ECO:0000269" key="4">
    <source>
    </source>
</evidence>
<comment type="function">
    <text>Component of the INO80 complex which remodels chromatin by shifting nucleosomes and is involved in DNA repair.</text>
</comment>
<comment type="subunit">
    <text evidence="4">Component of the INO80 chromatin remodeling complex.</text>
</comment>
<comment type="subcellular location">
    <subcellularLocation>
        <location evidence="2">Cytoplasm</location>
    </subcellularLocation>
    <subcellularLocation>
        <location evidence="2">Nucleus</location>
    </subcellularLocation>
</comment>
<gene>
    <name type="primary">ies4</name>
    <name type="ORF">SPAC23G3.04</name>
</gene>
<accession>Q9P7S9</accession>
<name>IES4_SCHPO</name>
<protein>
    <recommendedName>
        <fullName>INO80 complex subunit 4</fullName>
    </recommendedName>
</protein>
<feature type="chain" id="PRO_0000372366" description="INO80 complex subunit 4">
    <location>
        <begin position="1"/>
        <end position="194"/>
    </location>
</feature>
<feature type="region of interest" description="Disordered" evidence="1">
    <location>
        <begin position="24"/>
        <end position="107"/>
    </location>
</feature>
<feature type="region of interest" description="Disordered" evidence="1">
    <location>
        <begin position="170"/>
        <end position="194"/>
    </location>
</feature>
<feature type="compositionally biased region" description="Polar residues" evidence="1">
    <location>
        <begin position="28"/>
        <end position="38"/>
    </location>
</feature>
<feature type="compositionally biased region" description="Polar residues" evidence="1">
    <location>
        <begin position="82"/>
        <end position="97"/>
    </location>
</feature>
<feature type="modified residue" description="Phosphoserine" evidence="3">
    <location>
        <position position="86"/>
    </location>
</feature>
<feature type="modified residue" description="Phosphothreonine" evidence="3">
    <location>
        <position position="90"/>
    </location>
</feature>